<protein>
    <recommendedName>
        <fullName evidence="1">GTP cyclohydrolase FolE2</fullName>
        <ecNumber evidence="1">3.5.4.16</ecNumber>
    </recommendedName>
</protein>
<feature type="chain" id="PRO_0000372019" description="GTP cyclohydrolase FolE2">
    <location>
        <begin position="1"/>
        <end position="264"/>
    </location>
</feature>
<feature type="site" description="May be catalytically important" evidence="1">
    <location>
        <position position="150"/>
    </location>
</feature>
<keyword id="KW-0378">Hydrolase</keyword>
<keyword id="KW-1185">Reference proteome</keyword>
<gene>
    <name evidence="1" type="primary">folE2</name>
    <name type="ordered locus">Amuc_0093</name>
</gene>
<proteinExistence type="inferred from homology"/>
<comment type="function">
    <text evidence="1">Converts GTP to 7,8-dihydroneopterin triphosphate.</text>
</comment>
<comment type="catalytic activity">
    <reaction evidence="1">
        <text>GTP + H2O = 7,8-dihydroneopterin 3'-triphosphate + formate + H(+)</text>
        <dbReference type="Rhea" id="RHEA:17473"/>
        <dbReference type="ChEBI" id="CHEBI:15377"/>
        <dbReference type="ChEBI" id="CHEBI:15378"/>
        <dbReference type="ChEBI" id="CHEBI:15740"/>
        <dbReference type="ChEBI" id="CHEBI:37565"/>
        <dbReference type="ChEBI" id="CHEBI:58462"/>
        <dbReference type="EC" id="3.5.4.16"/>
    </reaction>
</comment>
<comment type="pathway">
    <text evidence="1">Cofactor biosynthesis; 7,8-dihydroneopterin triphosphate biosynthesis; 7,8-dihydroneopterin triphosphate from GTP: step 1/1.</text>
</comment>
<comment type="similarity">
    <text evidence="1">Belongs to the GTP cyclohydrolase IV family.</text>
</comment>
<dbReference type="EC" id="3.5.4.16" evidence="1"/>
<dbReference type="EMBL" id="CP001071">
    <property type="protein sequence ID" value="ACD03938.1"/>
    <property type="molecule type" value="Genomic_DNA"/>
</dbReference>
<dbReference type="RefSeq" id="WP_012419153.1">
    <property type="nucleotide sequence ID" value="NZ_CP071807.1"/>
</dbReference>
<dbReference type="SMR" id="B2ULP4"/>
<dbReference type="STRING" id="349741.Amuc_0093"/>
<dbReference type="PaxDb" id="349741-Amuc_0093"/>
<dbReference type="GeneID" id="60879523"/>
<dbReference type="KEGG" id="amu:Amuc_0093"/>
<dbReference type="eggNOG" id="COG1469">
    <property type="taxonomic scope" value="Bacteria"/>
</dbReference>
<dbReference type="HOGENOM" id="CLU_062816_1_1_0"/>
<dbReference type="OrthoDB" id="9774824at2"/>
<dbReference type="BioCyc" id="AMUC349741:G1GBX-114-MONOMER"/>
<dbReference type="UniPathway" id="UPA00848">
    <property type="reaction ID" value="UER00151"/>
</dbReference>
<dbReference type="Proteomes" id="UP000001031">
    <property type="component" value="Chromosome"/>
</dbReference>
<dbReference type="GO" id="GO:0003934">
    <property type="term" value="F:GTP cyclohydrolase I activity"/>
    <property type="evidence" value="ECO:0007669"/>
    <property type="project" value="UniProtKB-UniRule"/>
</dbReference>
<dbReference type="GO" id="GO:0046654">
    <property type="term" value="P:tetrahydrofolate biosynthetic process"/>
    <property type="evidence" value="ECO:0007669"/>
    <property type="project" value="UniProtKB-UniRule"/>
</dbReference>
<dbReference type="Gene3D" id="3.10.270.10">
    <property type="entry name" value="Urate Oxidase"/>
    <property type="match status" value="1"/>
</dbReference>
<dbReference type="HAMAP" id="MF_01527_B">
    <property type="entry name" value="GTP_cyclohydrol_B"/>
    <property type="match status" value="1"/>
</dbReference>
<dbReference type="InterPro" id="IPR022838">
    <property type="entry name" value="GTP_cyclohydrolase_FolE2"/>
</dbReference>
<dbReference type="InterPro" id="IPR003801">
    <property type="entry name" value="GTP_cyclohydrolase_FolE2/MptA"/>
</dbReference>
<dbReference type="NCBIfam" id="NF010200">
    <property type="entry name" value="PRK13674.1-1"/>
    <property type="match status" value="1"/>
</dbReference>
<dbReference type="PANTHER" id="PTHR36445">
    <property type="entry name" value="GTP CYCLOHYDROLASE MPTA"/>
    <property type="match status" value="1"/>
</dbReference>
<dbReference type="PANTHER" id="PTHR36445:SF1">
    <property type="entry name" value="GTP CYCLOHYDROLASE MPTA"/>
    <property type="match status" value="1"/>
</dbReference>
<dbReference type="Pfam" id="PF02649">
    <property type="entry name" value="GCHY-1"/>
    <property type="match status" value="1"/>
</dbReference>
<evidence type="ECO:0000255" key="1">
    <source>
        <dbReference type="HAMAP-Rule" id="MF_01527"/>
    </source>
</evidence>
<organism>
    <name type="scientific">Akkermansia muciniphila (strain ATCC BAA-835 / DSM 22959 / JCM 33894 / BCRC 81048 / CCUG 64013 / CIP 107961 / Muc)</name>
    <dbReference type="NCBI Taxonomy" id="349741"/>
    <lineage>
        <taxon>Bacteria</taxon>
        <taxon>Pseudomonadati</taxon>
        <taxon>Verrucomicrobiota</taxon>
        <taxon>Verrucomicrobiia</taxon>
        <taxon>Verrucomicrobiales</taxon>
        <taxon>Akkermansiaceae</taxon>
        <taxon>Akkermansia</taxon>
    </lineage>
</organism>
<sequence>MQELKDTQSEADTRNISIDRVGVKGLRFPIQIQDKLNRIQSTVATVSLAVDLPEEFKGTHMSRFVEALHQHGPLLDVHTALAIPRELLRRLSARRSHVEMEFPFFRSKNAPVTGIEGLMDYVVRFEMEAEANNKLADFKLTVIVPVTTLCPCSKAMSAYGAHNQRGLVTYSVRFASRPVWIEDLIDLVESCASCSLFSVLKRPDEKWVTEKAYENPVFVEDLVRNVALKTQSHSAFSWYRVEAENFESIHNHQAYAVIERDLRS</sequence>
<name>GCH4_AKKM8</name>
<accession>B2ULP4</accession>
<reference key="1">
    <citation type="journal article" date="2011" name="PLoS ONE">
        <title>The genome of Akkermansia muciniphila, a dedicated intestinal mucin degrader, and its use in exploring intestinal metagenomes.</title>
        <authorList>
            <person name="van Passel M.W."/>
            <person name="Kant R."/>
            <person name="Zoetendal E.G."/>
            <person name="Plugge C.M."/>
            <person name="Derrien M."/>
            <person name="Malfatti S.A."/>
            <person name="Chain P.S."/>
            <person name="Woyke T."/>
            <person name="Palva A."/>
            <person name="de Vos W.M."/>
            <person name="Smidt H."/>
        </authorList>
    </citation>
    <scope>NUCLEOTIDE SEQUENCE [LARGE SCALE GENOMIC DNA]</scope>
    <source>
        <strain>ATCC BAA-835 / DSM 22959 / JCM 33894 / BCRC 81048 / CCUG 64013 / CIP 107961 / Muc</strain>
    </source>
</reference>